<keyword id="KW-0004">4Fe-4S</keyword>
<keyword id="KW-0342">GTP-binding</keyword>
<keyword id="KW-0408">Iron</keyword>
<keyword id="KW-0411">Iron-sulfur</keyword>
<keyword id="KW-0456">Lyase</keyword>
<keyword id="KW-0479">Metal-binding</keyword>
<keyword id="KW-0501">Molybdenum cofactor biosynthesis</keyword>
<keyword id="KW-0547">Nucleotide-binding</keyword>
<keyword id="KW-0949">S-adenosyl-L-methionine</keyword>
<comment type="function">
    <text evidence="1">Catalyzes the cyclization of GTP to (8S)-3',8-cyclo-7,8-dihydroguanosine 5'-triphosphate.</text>
</comment>
<comment type="catalytic activity">
    <reaction evidence="1">
        <text>GTP + AH2 + S-adenosyl-L-methionine = (8S)-3',8-cyclo-7,8-dihydroguanosine 5'-triphosphate + 5'-deoxyadenosine + L-methionine + A + H(+)</text>
        <dbReference type="Rhea" id="RHEA:49576"/>
        <dbReference type="ChEBI" id="CHEBI:13193"/>
        <dbReference type="ChEBI" id="CHEBI:15378"/>
        <dbReference type="ChEBI" id="CHEBI:17319"/>
        <dbReference type="ChEBI" id="CHEBI:17499"/>
        <dbReference type="ChEBI" id="CHEBI:37565"/>
        <dbReference type="ChEBI" id="CHEBI:57844"/>
        <dbReference type="ChEBI" id="CHEBI:59789"/>
        <dbReference type="ChEBI" id="CHEBI:131766"/>
        <dbReference type="EC" id="4.1.99.22"/>
    </reaction>
</comment>
<comment type="cofactor">
    <cofactor evidence="1">
        <name>[4Fe-4S] cluster</name>
        <dbReference type="ChEBI" id="CHEBI:49883"/>
    </cofactor>
    <text evidence="1">Binds 2 [4Fe-4S] clusters. Binds 1 [4Fe-4S] cluster coordinated with 3 cysteines and an exchangeable S-adenosyl-L-methionine and 1 [4Fe-4S] cluster coordinated with 3 cysteines and the GTP-derived substrate.</text>
</comment>
<comment type="pathway">
    <text evidence="1">Cofactor biosynthesis; molybdopterin biosynthesis.</text>
</comment>
<comment type="subunit">
    <text evidence="1">Monomer and homodimer.</text>
</comment>
<comment type="similarity">
    <text evidence="1">Belongs to the radical SAM superfamily. MoaA family.</text>
</comment>
<dbReference type="EC" id="4.1.99.22" evidence="1"/>
<dbReference type="EMBL" id="CP000241">
    <property type="protein sequence ID" value="ABF84820.1"/>
    <property type="molecule type" value="Genomic_DNA"/>
</dbReference>
<dbReference type="RefSeq" id="WP_011550041.1">
    <property type="nucleotide sequence ID" value="NC_008086.1"/>
</dbReference>
<dbReference type="SMR" id="Q1CTA2"/>
<dbReference type="KEGG" id="hpa:HPAG1_0753"/>
<dbReference type="HOGENOM" id="CLU_009273_0_1_7"/>
<dbReference type="UniPathway" id="UPA00344"/>
<dbReference type="GO" id="GO:0051539">
    <property type="term" value="F:4 iron, 4 sulfur cluster binding"/>
    <property type="evidence" value="ECO:0007669"/>
    <property type="project" value="UniProtKB-UniRule"/>
</dbReference>
<dbReference type="GO" id="GO:0061799">
    <property type="term" value="F:cyclic pyranopterin monophosphate synthase activity"/>
    <property type="evidence" value="ECO:0007669"/>
    <property type="project" value="TreeGrafter"/>
</dbReference>
<dbReference type="GO" id="GO:0061798">
    <property type="term" value="F:GTP 3',8'-cyclase activity"/>
    <property type="evidence" value="ECO:0007669"/>
    <property type="project" value="UniProtKB-UniRule"/>
</dbReference>
<dbReference type="GO" id="GO:0005525">
    <property type="term" value="F:GTP binding"/>
    <property type="evidence" value="ECO:0007669"/>
    <property type="project" value="UniProtKB-UniRule"/>
</dbReference>
<dbReference type="GO" id="GO:0046872">
    <property type="term" value="F:metal ion binding"/>
    <property type="evidence" value="ECO:0007669"/>
    <property type="project" value="UniProtKB-KW"/>
</dbReference>
<dbReference type="GO" id="GO:1904047">
    <property type="term" value="F:S-adenosyl-L-methionine binding"/>
    <property type="evidence" value="ECO:0007669"/>
    <property type="project" value="UniProtKB-UniRule"/>
</dbReference>
<dbReference type="GO" id="GO:0006777">
    <property type="term" value="P:Mo-molybdopterin cofactor biosynthetic process"/>
    <property type="evidence" value="ECO:0007669"/>
    <property type="project" value="UniProtKB-UniRule"/>
</dbReference>
<dbReference type="CDD" id="cd01335">
    <property type="entry name" value="Radical_SAM"/>
    <property type="match status" value="1"/>
</dbReference>
<dbReference type="CDD" id="cd21117">
    <property type="entry name" value="Twitch_MoaA"/>
    <property type="match status" value="1"/>
</dbReference>
<dbReference type="Gene3D" id="3.20.20.70">
    <property type="entry name" value="Aldolase class I"/>
    <property type="match status" value="1"/>
</dbReference>
<dbReference type="HAMAP" id="MF_01225_B">
    <property type="entry name" value="MoaA_B"/>
    <property type="match status" value="1"/>
</dbReference>
<dbReference type="InterPro" id="IPR013785">
    <property type="entry name" value="Aldolase_TIM"/>
</dbReference>
<dbReference type="InterPro" id="IPR006638">
    <property type="entry name" value="Elp3/MiaA/NifB-like_rSAM"/>
</dbReference>
<dbReference type="InterPro" id="IPR013483">
    <property type="entry name" value="MoaA"/>
</dbReference>
<dbReference type="InterPro" id="IPR000385">
    <property type="entry name" value="MoaA_NifB_PqqE_Fe-S-bd_CS"/>
</dbReference>
<dbReference type="InterPro" id="IPR010505">
    <property type="entry name" value="MoaA_twitch"/>
</dbReference>
<dbReference type="InterPro" id="IPR050105">
    <property type="entry name" value="MoCo_biosynth_MoaA/MoaC"/>
</dbReference>
<dbReference type="InterPro" id="IPR007197">
    <property type="entry name" value="rSAM"/>
</dbReference>
<dbReference type="NCBIfam" id="TIGR02666">
    <property type="entry name" value="moaA"/>
    <property type="match status" value="1"/>
</dbReference>
<dbReference type="PANTHER" id="PTHR22960:SF0">
    <property type="entry name" value="MOLYBDENUM COFACTOR BIOSYNTHESIS PROTEIN 1"/>
    <property type="match status" value="1"/>
</dbReference>
<dbReference type="PANTHER" id="PTHR22960">
    <property type="entry name" value="MOLYBDOPTERIN COFACTOR SYNTHESIS PROTEIN A"/>
    <property type="match status" value="1"/>
</dbReference>
<dbReference type="Pfam" id="PF13353">
    <property type="entry name" value="Fer4_12"/>
    <property type="match status" value="1"/>
</dbReference>
<dbReference type="Pfam" id="PF06463">
    <property type="entry name" value="Mob_synth_C"/>
    <property type="match status" value="1"/>
</dbReference>
<dbReference type="Pfam" id="PF04055">
    <property type="entry name" value="Radical_SAM"/>
    <property type="match status" value="1"/>
</dbReference>
<dbReference type="SFLD" id="SFLDG01383">
    <property type="entry name" value="cyclic_pyranopterin_phosphate"/>
    <property type="match status" value="1"/>
</dbReference>
<dbReference type="SFLD" id="SFLDG01216">
    <property type="entry name" value="thioether_bond_formation_requi"/>
    <property type="match status" value="1"/>
</dbReference>
<dbReference type="SMART" id="SM00729">
    <property type="entry name" value="Elp3"/>
    <property type="match status" value="1"/>
</dbReference>
<dbReference type="SUPFAM" id="SSF102114">
    <property type="entry name" value="Radical SAM enzymes"/>
    <property type="match status" value="1"/>
</dbReference>
<dbReference type="PROSITE" id="PS01305">
    <property type="entry name" value="MOAA_NIFB_PQQE"/>
    <property type="match status" value="1"/>
</dbReference>
<dbReference type="PROSITE" id="PS51918">
    <property type="entry name" value="RADICAL_SAM"/>
    <property type="match status" value="1"/>
</dbReference>
<gene>
    <name evidence="1" type="primary">moaA</name>
    <name type="ordered locus">HPAG1_0753</name>
</gene>
<name>MOAA_HELPH</name>
<evidence type="ECO:0000255" key="1">
    <source>
        <dbReference type="HAMAP-Rule" id="MF_01225"/>
    </source>
</evidence>
<evidence type="ECO:0000255" key="2">
    <source>
        <dbReference type="PROSITE-ProRule" id="PRU01266"/>
    </source>
</evidence>
<protein>
    <recommendedName>
        <fullName evidence="1">GTP 3',8-cyclase</fullName>
        <ecNumber evidence="1">4.1.99.22</ecNumber>
    </recommendedName>
    <alternativeName>
        <fullName evidence="1">Molybdenum cofactor biosynthesis protein A</fullName>
    </alternativeName>
</protein>
<organism>
    <name type="scientific">Helicobacter pylori (strain HPAG1)</name>
    <dbReference type="NCBI Taxonomy" id="357544"/>
    <lineage>
        <taxon>Bacteria</taxon>
        <taxon>Pseudomonadati</taxon>
        <taxon>Campylobacterota</taxon>
        <taxon>Epsilonproteobacteria</taxon>
        <taxon>Campylobacterales</taxon>
        <taxon>Helicobacteraceae</taxon>
        <taxon>Helicobacter</taxon>
    </lineage>
</organism>
<reference key="1">
    <citation type="journal article" date="2006" name="Proc. Natl. Acad. Sci. U.S.A.">
        <title>The complete genome sequence of a chronic atrophic gastritis Helicobacter pylori strain: evolution during disease progression.</title>
        <authorList>
            <person name="Oh J.D."/>
            <person name="Kling-Baeckhed H."/>
            <person name="Giannakis M."/>
            <person name="Xu J."/>
            <person name="Fulton R.S."/>
            <person name="Fulton L.A."/>
            <person name="Cordum H.S."/>
            <person name="Wang C."/>
            <person name="Elliott G."/>
            <person name="Edwards J."/>
            <person name="Mardis E.R."/>
            <person name="Engstrand L.G."/>
            <person name="Gordon J.I."/>
        </authorList>
    </citation>
    <scope>NUCLEOTIDE SEQUENCE [LARGE SCALE GENOMIC DNA]</scope>
    <source>
        <strain>HPAG1</strain>
    </source>
</reference>
<accession>Q1CTA2</accession>
<proteinExistence type="inferred from homology"/>
<sequence length="321" mass="36713">MLVDSFNRVIDYIRVSVTKQCNFRCQYCMPATPLNFFDNEELLPLDNVLEFLKIAIDEGVKKIRITGGEPLLRKGLDEFIAKLHAYNKEVALVLSTNGFLLKKMAKDLKKAGLSRVNVSLDSLKSDRVLKISQKDALKNTLEGIEESLKVGLKLKLNTVVMKSVNGDEILDLLEYAKNRRIQIRYIEFMENTHAKSFVKGLKEEEILDLIAQKYKIMETEKPKQGSSKIYTLENGYQFGIIAPHSDDFCQSCNRIRLASDGKICPCLYYQDAIDAKEAIINKDTKMMKRLLKQSVINKPEKNMWNDKNSETPTRAFYYTGG</sequence>
<feature type="chain" id="PRO_1000054195" description="GTP 3',8-cyclase">
    <location>
        <begin position="1"/>
        <end position="321"/>
    </location>
</feature>
<feature type="domain" description="Radical SAM core" evidence="2">
    <location>
        <begin position="5"/>
        <end position="233"/>
    </location>
</feature>
<feature type="binding site" evidence="1">
    <location>
        <position position="14"/>
    </location>
    <ligand>
        <name>GTP</name>
        <dbReference type="ChEBI" id="CHEBI:37565"/>
    </ligand>
</feature>
<feature type="binding site" evidence="1">
    <location>
        <position position="21"/>
    </location>
    <ligand>
        <name>[4Fe-4S] cluster</name>
        <dbReference type="ChEBI" id="CHEBI:49883"/>
        <label>1</label>
        <note>4Fe-4S-S-AdoMet</note>
    </ligand>
</feature>
<feature type="binding site" evidence="1">
    <location>
        <position position="25"/>
    </location>
    <ligand>
        <name>[4Fe-4S] cluster</name>
        <dbReference type="ChEBI" id="CHEBI:49883"/>
        <label>1</label>
        <note>4Fe-4S-S-AdoMet</note>
    </ligand>
</feature>
<feature type="binding site" evidence="1">
    <location>
        <position position="27"/>
    </location>
    <ligand>
        <name>S-adenosyl-L-methionine</name>
        <dbReference type="ChEBI" id="CHEBI:59789"/>
    </ligand>
</feature>
<feature type="binding site" evidence="1">
    <location>
        <position position="28"/>
    </location>
    <ligand>
        <name>[4Fe-4S] cluster</name>
        <dbReference type="ChEBI" id="CHEBI:49883"/>
        <label>1</label>
        <note>4Fe-4S-S-AdoMet</note>
    </ligand>
</feature>
<feature type="binding site" evidence="1">
    <location>
        <position position="64"/>
    </location>
    <ligand>
        <name>GTP</name>
        <dbReference type="ChEBI" id="CHEBI:37565"/>
    </ligand>
</feature>
<feature type="binding site" evidence="1">
    <location>
        <position position="68"/>
    </location>
    <ligand>
        <name>S-adenosyl-L-methionine</name>
        <dbReference type="ChEBI" id="CHEBI:59789"/>
    </ligand>
</feature>
<feature type="binding site" evidence="1">
    <location>
        <position position="95"/>
    </location>
    <ligand>
        <name>GTP</name>
        <dbReference type="ChEBI" id="CHEBI:37565"/>
    </ligand>
</feature>
<feature type="binding site" evidence="1">
    <location>
        <position position="119"/>
    </location>
    <ligand>
        <name>S-adenosyl-L-methionine</name>
        <dbReference type="ChEBI" id="CHEBI:59789"/>
    </ligand>
</feature>
<feature type="binding site" evidence="1">
    <location>
        <position position="155"/>
    </location>
    <ligand>
        <name>GTP</name>
        <dbReference type="ChEBI" id="CHEBI:37565"/>
    </ligand>
</feature>
<feature type="binding site" evidence="1">
    <location>
        <position position="189"/>
    </location>
    <ligand>
        <name>S-adenosyl-L-methionine</name>
        <dbReference type="ChEBI" id="CHEBI:59789"/>
    </ligand>
</feature>
<feature type="binding site" evidence="1">
    <location>
        <position position="249"/>
    </location>
    <ligand>
        <name>[4Fe-4S] cluster</name>
        <dbReference type="ChEBI" id="CHEBI:49883"/>
        <label>2</label>
        <note>4Fe-4S-substrate</note>
    </ligand>
</feature>
<feature type="binding site" evidence="1">
    <location>
        <position position="252"/>
    </location>
    <ligand>
        <name>[4Fe-4S] cluster</name>
        <dbReference type="ChEBI" id="CHEBI:49883"/>
        <label>2</label>
        <note>4Fe-4S-substrate</note>
    </ligand>
</feature>
<feature type="binding site" evidence="1">
    <location>
        <begin position="254"/>
        <end position="256"/>
    </location>
    <ligand>
        <name>GTP</name>
        <dbReference type="ChEBI" id="CHEBI:37565"/>
    </ligand>
</feature>
<feature type="binding site" evidence="1">
    <location>
        <position position="266"/>
    </location>
    <ligand>
        <name>[4Fe-4S] cluster</name>
        <dbReference type="ChEBI" id="CHEBI:49883"/>
        <label>2</label>
        <note>4Fe-4S-substrate</note>
    </ligand>
</feature>